<protein>
    <recommendedName>
        <fullName>Cellular tumor antigen p53</fullName>
    </recommendedName>
    <alternativeName>
        <fullName>Tumor suppressor p53</fullName>
    </alternativeName>
</protein>
<comment type="function">
    <text evidence="2 3">Multifunctional transcription factor that induces cell cycle arrest, DNA repair or apoptosis upon binding to its target DNA sequence. Acts as a tumor suppressor in many tumor types; induces growth arrest or apoptosis depending on the physiological circumstances and cell type. Negatively regulates cell division by controlling expression of a set of genes required for this process. One of the activated genes is an inhibitor of cyclin-dependent kinases. Apoptosis induction seems to be mediated either by stimulation of BAX and FAS antigen expression, or by repression of Bcl-2 expression. Its pro-apoptotic activity is activated via its interaction with PPP1R13B/ASPP1 or TP53BP2/ASPP2 (By similarity). However, this activity is inhibited when the interaction with PPP1R13B/ASPP1 or TP53BP2/ASPP2 is displaced by PPP1R13L/iASPP (By similarity). In cooperation with mitochondrial PPIF is involved in activating oxidative stress-induced necrosis; the function is largely independent of transcription. Prevents CDK7 kinase activity when associated to CAK complex in response to DNA damage, thus stopping cell cycle progression. Induces the transcription of long intergenic non-coding RNA p21 (lincRNA-p21) and lincRNA-Mkln1. LincRNA-p21 participates in TP53-dependent transcriptional repression leading to apoptosis and seems to have an effect on cell-cycle regulation. Regulates the circadian clock by repressing CLOCK-BMAL1-mediated transcriptional activation of PER2.</text>
</comment>
<comment type="cofactor">
    <cofactor evidence="1">
        <name>Zn(2+)</name>
        <dbReference type="ChEBI" id="CHEBI:29105"/>
    </cofactor>
    <text evidence="1">Binds 1 zinc ion per subunit.</text>
</comment>
<comment type="subunit">
    <text evidence="2 3 4">Forms homodimers and homotetramers (By similarity). Binds DNA as a homotetramer. Interacts with AXIN1. Probably part of a complex consisting of TP53, HIPK2 and AXIN1. Interacts with histone acetyltransferases EP300 and methyltransferases HRMT1L2 and CARM1, and recruits them to promoters. Interacts (via C-terminus) with TAF1; when TAF1 is part of the TFIID complex. Interacts with ING4; this interaction may be indirect. Found in a complex with CABLES1 and TP73. Interacts with HIPK1, HIPK2, and TP53INP1. Interacts with WWOX. Interacts with USP7 and SYVN1. Interacts with HSP90AB1. Interacts with CHD8; leading to recruit histone H1 and prevent transactivation activity. Interacts with ARMC10, BANP, CDKN2AIP, NUAK1, STK11/LKB1, UHRF2 and E4F. Interacts with YWHAZ; the interaction enhances TP53 transcriptional activity. Phosphorylation of YWHAZ on 'Ser-58' inhibits this interaction. Interacts (via DNA-binding domain) with MAML1 (via N-terminus). Interacts with MKRN1. Interacts with PML (via C-terminus). Interacts with MDM2; leading to ubiquitination and proteasomal degradation of TP53. Directly interacts with FBXO42; leading to ubiquitination and degradation of TP53. Interacts (phosphorylated at Ser-15 by ATM) with the phosphatase PP2A-PPP2R5C holoenzyme; regulates stress-induced TP53-dependent inhibition of cell proliferation. Interacts with PPP2R2A. Interacts with AURKA, DAXX, BRD7 and TRIM24. Interacts (when monomethylated at Lys-382) with L3MBTL1. Interacts with GRK5. Binds to the CAK complex (CDK7, cyclin H and MAT1) in response to DNA damage. Interacts with CDK5 in neurons. Interacts with AURKB, SETD2, UHRF2 and NOC2L. Interacts (via N-terminus) with PTK2/FAK1; this promotes ubiquitination by MDM2. Interacts with PTK2B/PYK2; this promotes ubiquitination by MDM2. Interacts with PRKCG. Interacts with PPIF; the association implicates preferentially tetrameric TP53, is induced by oxidative stress and is impaired by cyclosporin A (CsA). Interacts with SNAI1; the interaction induces SNAI1 degradation via MDM2-mediated ubiquitination and inhibits SNAI1-induced cell invasion. Interacts with UBC9. Interacts with ZNF385B; the interaction is direct. Interacts (via DNA-binding domain) with ZNF385A; the interaction is direct and enhances p53/TP53 transactivation functions on cell-cycle arrest target genes, resulting in growth arrest (By similarity). Interacts with ANKRD2. Interacts with RFFL and RNF34; involved in p53/TP53 ubiquitination. Interacts with MTA1 and COP1. Interacts with CCAR2 (via N-terminus). Interacts with MORC3. Interacts (via C-terminus) with POU4F2 (via C-terminus). Interacts (via oligomerization region) with NOP53; the interaction is direct and may prevent the MDM2-mediated proteasomal degradation of TP53. Interacts with AFG1L; mediates mitochondrial translocation of TP53. Interacts with UBD (By similarity). Interacts with TAF6 (By similarity). Interacts with C10orf90/FATS; the interaction inhibits binding of TP53 and MDM2 (By similarity). Interacts with NUPR1; interaction is stress-dependent. Forms a complex with EP300 and NUPR1; this complex binds CDKN1A promoter leading to transcriptional induction of CDKN1A (By similarity). Interacts with PRMT5 in response to DNA damage; the interaction is TTC5/STRAP dependent (By similarity). Interacts with PPP1R13L (via SH3 domain and ANK repeats); the interaction inhibits pro-apoptotic activity of p53/TP53 (By similarity). Interacts with PPP1R13B/ASPP1 and TP53BP2/ASPP2; the interactions promotes pro-apoptotic activity (By similarity). When phosphorylated at Ser-15, interacts with DDX3X and gamma-tubulin (By similarity). Interacts with KAT7/HBO1; leading to inhibit histone acetyltransferase activity of KAT7/HBO1 (By similarity). Interacts (via N-terminus) with E3 ubiquitin-protein ligase MUL1; the interaction results in ubiquitination of cytoplasmic TP53 at Lys-24 and subsequent proteasomal degradation (By similarity). Interacts with S100A4; this interaction promotes TP53 degradation (By similarity). Interacts with TTC5/STRAP; the interaction may result in increased mitochondrial-dependent apoptosis (By similarity). Interacts with NQO1; this interaction is NADH-dependent, stabilizes TP53 in response to oxidative stress and protects it from ubiquitin-independent degradation by the 20S proteasome (By similarity). Interacts with DAZAP2 at TP53 target gene promoters; the interaction is triggered by DNA damage and leads to modulation of the expression of a subset of TP53 target genes, reducing DNA damage-induced cell death by limiting the expression of cell death-mediating TP53 target genes (By similarity). Interacts (via N-terminus) with ZNF768 (via zinc-finger domains); interaction might be facilitated by TP53 oligomerization state (By similarity). Forms a ternary complex with ALDOB and G6PD; this interaction is direct. ALDOB stabilizes the complex inhibiting G6PD activity and keeping oxidative pentose phosphate metabolism in check. Interacts with MORN3; the interactions mediate post-transcriptional modifications of TP53 by MDM2 and SIRT1 (By similarity). Interacts with HSPA9/MOT-2; the interaction promotes the degradation of TP53 (By similarity). Interacts with FBXO22; this interaction promotes TP53 proteasomal degradation (By similarity).</text>
</comment>
<comment type="subcellular location">
    <subcellularLocation>
        <location evidence="3">Cytoplasm</location>
    </subcellularLocation>
    <subcellularLocation>
        <location evidence="3">Nucleus</location>
    </subcellularLocation>
    <subcellularLocation>
        <location evidence="3">Nucleus</location>
        <location evidence="3">PML body</location>
    </subcellularLocation>
    <subcellularLocation>
        <location evidence="3">Endoplasmic reticulum</location>
    </subcellularLocation>
    <subcellularLocation>
        <location evidence="3">Mitochondrion matrix</location>
    </subcellularLocation>
    <subcellularLocation>
        <location evidence="3">Cytoplasm</location>
        <location evidence="3">Cytoskeleton</location>
        <location evidence="3">Microtubule organizing center</location>
        <location evidence="3">Centrosome</location>
    </subcellularLocation>
    <text evidence="3">Interaction with BANP promotes nuclear localization. Recruited into PML bodies together with CHEK2. Translocates to mitochondria upon oxidative stress. Translocates to mitochondria in response to mitomycin C treatment (By similarity). Competitive inhibition of TP53 interaction with HSPA9/MOT-2 by UBXN2A results in increased protein abundance and subsequent translocation of TP53 to the nucleus (By similarity).</text>
</comment>
<comment type="domain">
    <text evidence="3">The N-terminal and C-terminal disordered regions undergo liquid-liquid phase separation (LLPS) following homotetramerization and activation. Post-translational modifications, such as phosphorylation or lactylation affect the ability to undergo LLPS.</text>
</comment>
<comment type="domain">
    <text evidence="3">The nuclear export signal acts as a transcriptional repression domain. The TADI and TADII motifs (residues 17 to 25 and 48 to 56) correspond both to 9aaTAD motifs which are transactivation domains present in a large number of yeast and animal transcription factors.</text>
</comment>
<comment type="PTM">
    <text evidence="1 3">Phosphorylation on Ser residues mediates transcriptional activation. Phosphorylation at Ser-9 by HIPK4 increases repression activity on BIRC5 promoter (By similarity). Phosphorylated on Thr-18 by VRK1, which may prevent the interaction with MDM2. Phosphorylated on Ser-20 by CHEK2 in response to DNA damage, which prevents ubiquitination by MDM2. Phosphorylated on Ser-20 by PLK3 in response to reactive oxygen species (ROS), promoting p53/TP53-mediated apoptosis. Phosphorylated on Thr-55 by TAF1 which promotes MDM2-mediated TP53 degradation. Phosphorylated on Ser-33 by CDK7 in a CAK complex in response to DNA damage. Phosphorylated by HIPK1. Phosphorylated on Ser-46 by HIPK2 upon UV irradiation. Phosphorylation on Ser-46 is required for acetylation by CREBBP. Phosphorylated on Ser-392 following UV but not gamma irradiation. Stabilized by CDK5-mediated phosphorylation in response to genotoxic and oxidative stresses at Ser-15, Ser-33 and Ser-46, leading to accumulation of p53/TP53, particularly in the nucleus, thus inducing the transactivation of p53/TP53 target genes. Phosphorylated by DYRK2 at Ser-46 in response to genotoxic stress. Phosphorylated at Ser-315 and Ser-392 by CDK2 in response to DNA-damage (By similarity). Phosphorylation at Ser-15 is required for interaction with DDX3X and gamma-tubulin (By similarity). Phosphorylation at Ser-392 regulates its ability to undergo liquid-liquid phase separation by increasing fluidity of TP53/p53 condensates (By similarity).</text>
</comment>
<comment type="PTM">
    <text evidence="3">Ubiquitinated by MDM2 and SYVN1, which leads to proteasomal degradation. Ubiquitinated by RFWD3, which works in cooperation with MDM2 and may catalyze the formation of short polyubiquitin chains on p53/TP53 that are not targeted to the proteasome. Ubiquitinated by MKRN1 at Lys-291 and Lys-292, which leads to proteasomal degradation. Deubiquitinated by USP10, leading to stabilize it. Ubiquitinated by TRIM24, RFFL, RNF34 and RNF125, which leads to proteasomal degradation. Ubiquitination by TOPORS induces degradation. Deubiquitination by USP7, leading to stabilize it. Ubiquitinated by COP1, which leads to proteasomal degradation. Ubiquitination and subsequent proteasomal degradation is negatively regulated by CCAR2 (By similarity). Deubiquitinated by USP3, leading to stabilization (By similarity). Ubiquitinated by MSL2, promoting its cytoplasmic localization (By similarity). Also ubiquitinated by the SCF(FBXO22)-KDMA4A complex; leading to proteasomal degradation (By similarity).</text>
</comment>
<comment type="PTM">
    <text evidence="3">Monomethylated at Lys-372 by SETD7, leading to stabilization and increased transcriptional activation. Monomethylated at Lys-370 by SMYD2, leading to decreased DNA-binding activity and subsequent transcriptional regulation activity. Lys-372 monomethylation prevents interaction with SMYD2 and subsequent monomethylation at Lys-370. Dimethylated at Lys-373 by EHMT1 and EHMT2. Monomethylated at Lys-382 by KMT5A, promoting interaction with L3MBTL1 and leading to repress transcriptional activity. Demethylation of dimethylated Lys-370 by KDM1A prevents interaction with TP53BP1 and represses TP53-mediated transcriptional activation (By similarity). Monomethylated at Arg-333 and dimethylated at Arg-335 and Arg-337 by PRMT5; methylation is increased after DNA damage and might possibly affect TP53 target gene specificity (By similarity).</text>
</comment>
<comment type="PTM">
    <text evidence="1">Sumoylated with SUMO1. Sumoylated at Lys-386 by UBC9 (By similarity).</text>
</comment>
<comment type="PTM">
    <text evidence="2 3">Ubiquitinated by MDM2 and SYVN1, which leads to proteasomal degradation. Ubiquitinated by RFWD3, which works in cooperation with MDM2 and may catalyze the formation of short polyubiquitin chains on p53/TP53 that are not targeted to the proteasome. Ubiquitinated by MKRN1, which leads to proteasomal degradation. Deubiquitinated by USP10, leading to stabilize it. Ubiquitinated by TRIM24, RFFL, RNF34 and RNF125, which leads to proteasomal degradation. Ubiquitination by TOPORS induces degradation. Deubiquitination by USP7, leading to stabilize it. Ubiquitinated by COP1, which leads to proteasomal degradation (By similarity). Ubiquitination and subsequent proteasomal degradation is negatively regulated by CCAR2 (By similarity). Polyubiquitinated by C10orf90/FATS, polyubiquitination is 'Lys-48'-linkage independent and non-proteolytic, leading to TP53 stabilization (By similarity). Polyubiquitinated by MUL1 at Lys-24 which leads to proteasomal degradation (By similarity).</text>
</comment>
<comment type="PTM">
    <text evidence="3">Acetylation of Lys-382 by CREBBP enhances transcriptional activity. Acetylation of Lys-382 by EP300. Deacetylation of Lys-382 by SIRT1 impairs its ability to induce proapoptotic program and modulate cell senescence. Deacetylation by SIRT2 impairs its ability to induce transcription activation in a AKT-dependent manner. Acetylation at Lys-381 increases stability. Deacetylation at Lys-381 by SIRT6 decreases its stability, thereby regulating cell senescence. Acetylated at Lys-120 by KAT5, KAT6A and KAT8; regulating its ability to induce proapoptotic program.</text>
</comment>
<comment type="PTM">
    <text evidence="3">Lactylation by AARS1 prevents ability to undergo liquid-liquid phase separation (LLPS), thereby inhibiting transcription factor activity.</text>
</comment>
<comment type="disease">
    <text>p53 is found in increased amounts in a wide variety of transformed cells. p53 is frequently mutated or inactivated in many types of cancer.</text>
</comment>
<comment type="similarity">
    <text evidence="6">Belongs to the p53 family.</text>
</comment>
<sequence>MEEPQSDPSIEPPLSQETFSDLWKLLPENNVLSPLPSQAVDDLMLSPDDLAQWLTEDPGPDEAPRMSEAAPPMAPTPAAPTPAAPAPAPSWPLSSSVPSQKTYHGSYGFRLGFLHSGTAKSVTCTYSPDLNKMFCQLAKTCPVQLWVDSTPPPGSRVRAMAIYKQSQHMTEVVRRCPHHERCSDSDGLAPPQHLIRVEGNLRVEYSDDRNTFRHSVVVPYEPPEVGSDCTTIHYNYMCNSSCMGGMNRRPILTIITLEDSSGNLLGRNSFEVRVCACPGRDRRTEEENFRKKGEPCHQLPPGSTKRALPNNTSSSPQPKKKPLDGEYFTLQIRGRERFEMFRELNEALELKDAQAGKEPAGSRAHSSHLKSKKGQSTSRHKKFMFKTEGPDSD</sequence>
<accession>P56423</accession>
<organism>
    <name type="scientific">Macaca fascicularis</name>
    <name type="common">Crab-eating macaque</name>
    <name type="synonym">Cynomolgus monkey</name>
    <dbReference type="NCBI Taxonomy" id="9541"/>
    <lineage>
        <taxon>Eukaryota</taxon>
        <taxon>Metazoa</taxon>
        <taxon>Chordata</taxon>
        <taxon>Craniata</taxon>
        <taxon>Vertebrata</taxon>
        <taxon>Euteleostomi</taxon>
        <taxon>Mammalia</taxon>
        <taxon>Eutheria</taxon>
        <taxon>Euarchontoglires</taxon>
        <taxon>Primates</taxon>
        <taxon>Haplorrhini</taxon>
        <taxon>Catarrhini</taxon>
        <taxon>Cercopithecidae</taxon>
        <taxon>Cercopithecinae</taxon>
        <taxon>Macaca</taxon>
    </lineage>
</organism>
<dbReference type="EMBL" id="U48957">
    <property type="protein sequence ID" value="AAB91535.1"/>
    <property type="molecule type" value="Genomic_DNA"/>
</dbReference>
<dbReference type="EMBL" id="AF456343">
    <property type="protein sequence ID" value="AAN64027.1"/>
    <property type="molecule type" value="mRNA"/>
</dbReference>
<dbReference type="RefSeq" id="NP_001274608.1">
    <property type="nucleotide sequence ID" value="NM_001287679.1"/>
</dbReference>
<dbReference type="RefSeq" id="XP_005582844.1">
    <property type="nucleotide sequence ID" value="XM_005582787.4"/>
</dbReference>
<dbReference type="RefSeq" id="XP_045231359.1">
    <property type="nucleotide sequence ID" value="XM_045375424.2"/>
</dbReference>
<dbReference type="BMRB" id="P56423"/>
<dbReference type="SMR" id="P56423"/>
<dbReference type="STRING" id="9541.ENSMFAP00000038526"/>
<dbReference type="Ensembl" id="ENSMFAT00000012781.2">
    <property type="protein sequence ID" value="ENSMFAP00000038526.1"/>
    <property type="gene ID" value="ENSMFAG00000038506.2"/>
</dbReference>
<dbReference type="GeneID" id="102135998"/>
<dbReference type="CTD" id="7157"/>
<dbReference type="VEuPathDB" id="HostDB:ENSMFAG00000038506"/>
<dbReference type="eggNOG" id="ENOG502QVY3">
    <property type="taxonomic scope" value="Eukaryota"/>
</dbReference>
<dbReference type="GeneTree" id="ENSGT00950000183153"/>
<dbReference type="OMA" id="HKKGEPC"/>
<dbReference type="Proteomes" id="UP000233100">
    <property type="component" value="Chromosome 16"/>
</dbReference>
<dbReference type="Bgee" id="ENSMFAG00000038506">
    <property type="expression patterns" value="Expressed in lymph node and 12 other cell types or tissues"/>
</dbReference>
<dbReference type="GO" id="GO:0005813">
    <property type="term" value="C:centrosome"/>
    <property type="evidence" value="ECO:0000250"/>
    <property type="project" value="UniProtKB"/>
</dbReference>
<dbReference type="GO" id="GO:0000785">
    <property type="term" value="C:chromatin"/>
    <property type="evidence" value="ECO:0007669"/>
    <property type="project" value="Ensembl"/>
</dbReference>
<dbReference type="GO" id="GO:0005737">
    <property type="term" value="C:cytoplasm"/>
    <property type="evidence" value="ECO:0000250"/>
    <property type="project" value="UniProtKB"/>
</dbReference>
<dbReference type="GO" id="GO:0005829">
    <property type="term" value="C:cytosol"/>
    <property type="evidence" value="ECO:0007669"/>
    <property type="project" value="Ensembl"/>
</dbReference>
<dbReference type="GO" id="GO:0005783">
    <property type="term" value="C:endoplasmic reticulum"/>
    <property type="evidence" value="ECO:0007669"/>
    <property type="project" value="UniProtKB-SubCell"/>
</dbReference>
<dbReference type="GO" id="GO:0043073">
    <property type="term" value="C:germ cell nucleus"/>
    <property type="evidence" value="ECO:0007669"/>
    <property type="project" value="Ensembl"/>
</dbReference>
<dbReference type="GO" id="GO:0005759">
    <property type="term" value="C:mitochondrial matrix"/>
    <property type="evidence" value="ECO:0007669"/>
    <property type="project" value="UniProtKB-SubCell"/>
</dbReference>
<dbReference type="GO" id="GO:0005739">
    <property type="term" value="C:mitochondrion"/>
    <property type="evidence" value="ECO:0000250"/>
    <property type="project" value="UniProtKB"/>
</dbReference>
<dbReference type="GO" id="GO:0016363">
    <property type="term" value="C:nuclear matrix"/>
    <property type="evidence" value="ECO:0007669"/>
    <property type="project" value="Ensembl"/>
</dbReference>
<dbReference type="GO" id="GO:0005730">
    <property type="term" value="C:nucleolus"/>
    <property type="evidence" value="ECO:0000250"/>
    <property type="project" value="UniProtKB"/>
</dbReference>
<dbReference type="GO" id="GO:0005634">
    <property type="term" value="C:nucleus"/>
    <property type="evidence" value="ECO:0000250"/>
    <property type="project" value="UniProtKB"/>
</dbReference>
<dbReference type="GO" id="GO:0016605">
    <property type="term" value="C:PML body"/>
    <property type="evidence" value="ECO:0007669"/>
    <property type="project" value="UniProtKB-SubCell"/>
</dbReference>
<dbReference type="GO" id="GO:0005657">
    <property type="term" value="C:replication fork"/>
    <property type="evidence" value="ECO:0007669"/>
    <property type="project" value="Ensembl"/>
</dbReference>
<dbReference type="GO" id="GO:0035861">
    <property type="term" value="C:site of double-strand break"/>
    <property type="evidence" value="ECO:0007669"/>
    <property type="project" value="Ensembl"/>
</dbReference>
<dbReference type="GO" id="GO:0017053">
    <property type="term" value="C:transcription repressor complex"/>
    <property type="evidence" value="ECO:0007669"/>
    <property type="project" value="Ensembl"/>
</dbReference>
<dbReference type="GO" id="GO:0036310">
    <property type="term" value="F:ATP-dependent DNA/DNA annealing activity"/>
    <property type="evidence" value="ECO:0000250"/>
    <property type="project" value="UniProtKB"/>
</dbReference>
<dbReference type="GO" id="GO:0005507">
    <property type="term" value="F:copper ion binding"/>
    <property type="evidence" value="ECO:0000250"/>
    <property type="project" value="UniProtKB"/>
</dbReference>
<dbReference type="GO" id="GO:0001046">
    <property type="term" value="F:core promoter sequence-specific DNA binding"/>
    <property type="evidence" value="ECO:0007669"/>
    <property type="project" value="Ensembl"/>
</dbReference>
<dbReference type="GO" id="GO:0097718">
    <property type="term" value="F:disordered domain specific binding"/>
    <property type="evidence" value="ECO:0007669"/>
    <property type="project" value="Ensembl"/>
</dbReference>
<dbReference type="GO" id="GO:0003677">
    <property type="term" value="F:DNA binding"/>
    <property type="evidence" value="ECO:0000250"/>
    <property type="project" value="UniProtKB"/>
</dbReference>
<dbReference type="GO" id="GO:0001228">
    <property type="term" value="F:DNA-binding transcription activator activity, RNA polymerase II-specific"/>
    <property type="evidence" value="ECO:0007669"/>
    <property type="project" value="Ensembl"/>
</dbReference>
<dbReference type="GO" id="GO:0000981">
    <property type="term" value="F:DNA-binding transcription factor activity, RNA polymerase II-specific"/>
    <property type="evidence" value="ECO:0000250"/>
    <property type="project" value="UniProtKB"/>
</dbReference>
<dbReference type="GO" id="GO:0001227">
    <property type="term" value="F:DNA-binding transcription repressor activity, RNA polymerase II-specific"/>
    <property type="evidence" value="ECO:0007669"/>
    <property type="project" value="Ensembl"/>
</dbReference>
<dbReference type="GO" id="GO:0042826">
    <property type="term" value="F:histone deacetylase binding"/>
    <property type="evidence" value="ECO:0007669"/>
    <property type="project" value="Ensembl"/>
</dbReference>
<dbReference type="GO" id="GO:0035033">
    <property type="term" value="F:histone deacetylase regulator activity"/>
    <property type="evidence" value="ECO:0007669"/>
    <property type="project" value="Ensembl"/>
</dbReference>
<dbReference type="GO" id="GO:0042802">
    <property type="term" value="F:identical protein binding"/>
    <property type="evidence" value="ECO:0007669"/>
    <property type="project" value="Ensembl"/>
</dbReference>
<dbReference type="GO" id="GO:0097371">
    <property type="term" value="F:MDM2/MDM4 family protein binding"/>
    <property type="evidence" value="ECO:0007669"/>
    <property type="project" value="Ensembl"/>
</dbReference>
<dbReference type="GO" id="GO:0140693">
    <property type="term" value="F:molecular condensate scaffold activity"/>
    <property type="evidence" value="ECO:0000250"/>
    <property type="project" value="UniProtKB"/>
</dbReference>
<dbReference type="GO" id="GO:0140677">
    <property type="term" value="F:molecular function activator activity"/>
    <property type="evidence" value="ECO:0007669"/>
    <property type="project" value="Ensembl"/>
</dbReference>
<dbReference type="GO" id="GO:0003730">
    <property type="term" value="F:mRNA 3'-UTR binding"/>
    <property type="evidence" value="ECO:0007669"/>
    <property type="project" value="Ensembl"/>
</dbReference>
<dbReference type="GO" id="GO:0002039">
    <property type="term" value="F:p53 binding"/>
    <property type="evidence" value="ECO:0007669"/>
    <property type="project" value="Ensembl"/>
</dbReference>
<dbReference type="GO" id="GO:1990841">
    <property type="term" value="F:promoter-specific chromatin binding"/>
    <property type="evidence" value="ECO:0000250"/>
    <property type="project" value="UniProtKB"/>
</dbReference>
<dbReference type="GO" id="GO:0002020">
    <property type="term" value="F:protease binding"/>
    <property type="evidence" value="ECO:0007669"/>
    <property type="project" value="Ensembl"/>
</dbReference>
<dbReference type="GO" id="GO:0046982">
    <property type="term" value="F:protein heterodimerization activity"/>
    <property type="evidence" value="ECO:0007669"/>
    <property type="project" value="Ensembl"/>
</dbReference>
<dbReference type="GO" id="GO:0051721">
    <property type="term" value="F:protein phosphatase 2A binding"/>
    <property type="evidence" value="ECO:0007669"/>
    <property type="project" value="Ensembl"/>
</dbReference>
<dbReference type="GO" id="GO:0051087">
    <property type="term" value="F:protein-folding chaperone binding"/>
    <property type="evidence" value="ECO:0007669"/>
    <property type="project" value="Ensembl"/>
</dbReference>
<dbReference type="GO" id="GO:0030971">
    <property type="term" value="F:receptor tyrosine kinase binding"/>
    <property type="evidence" value="ECO:0007669"/>
    <property type="project" value="Ensembl"/>
</dbReference>
<dbReference type="GO" id="GO:0000978">
    <property type="term" value="F:RNA polymerase II cis-regulatory region sequence-specific DNA binding"/>
    <property type="evidence" value="ECO:0000250"/>
    <property type="project" value="UniProtKB"/>
</dbReference>
<dbReference type="GO" id="GO:0061629">
    <property type="term" value="F:RNA polymerase II-specific DNA-binding transcription factor binding"/>
    <property type="evidence" value="ECO:0007669"/>
    <property type="project" value="Ensembl"/>
</dbReference>
<dbReference type="GO" id="GO:0001094">
    <property type="term" value="F:TFIID-class transcription factor complex binding"/>
    <property type="evidence" value="ECO:0007669"/>
    <property type="project" value="Ensembl"/>
</dbReference>
<dbReference type="GO" id="GO:0001223">
    <property type="term" value="F:transcription coactivator binding"/>
    <property type="evidence" value="ECO:0007669"/>
    <property type="project" value="Ensembl"/>
</dbReference>
<dbReference type="GO" id="GO:0031625">
    <property type="term" value="F:ubiquitin protein ligase binding"/>
    <property type="evidence" value="ECO:0007669"/>
    <property type="project" value="Ensembl"/>
</dbReference>
<dbReference type="GO" id="GO:0002326">
    <property type="term" value="P:B cell lineage commitment"/>
    <property type="evidence" value="ECO:0007669"/>
    <property type="project" value="Ensembl"/>
</dbReference>
<dbReference type="GO" id="GO:0048539">
    <property type="term" value="P:bone marrow development"/>
    <property type="evidence" value="ECO:0007669"/>
    <property type="project" value="Ensembl"/>
</dbReference>
<dbReference type="GO" id="GO:0010659">
    <property type="term" value="P:cardiac muscle cell apoptotic process"/>
    <property type="evidence" value="ECO:0007669"/>
    <property type="project" value="Ensembl"/>
</dbReference>
<dbReference type="GO" id="GO:0060411">
    <property type="term" value="P:cardiac septum morphogenesis"/>
    <property type="evidence" value="ECO:0007669"/>
    <property type="project" value="Ensembl"/>
</dbReference>
<dbReference type="GO" id="GO:0072717">
    <property type="term" value="P:cellular response to actinomycin D"/>
    <property type="evidence" value="ECO:0007669"/>
    <property type="project" value="Ensembl"/>
</dbReference>
<dbReference type="GO" id="GO:0071480">
    <property type="term" value="P:cellular response to gamma radiation"/>
    <property type="evidence" value="ECO:0007669"/>
    <property type="project" value="Ensembl"/>
</dbReference>
<dbReference type="GO" id="GO:0042149">
    <property type="term" value="P:cellular response to glucose starvation"/>
    <property type="evidence" value="ECO:0007669"/>
    <property type="project" value="Ensembl"/>
</dbReference>
<dbReference type="GO" id="GO:0071494">
    <property type="term" value="P:cellular response to UV-C"/>
    <property type="evidence" value="ECO:0007669"/>
    <property type="project" value="Ensembl"/>
</dbReference>
<dbReference type="GO" id="GO:0071466">
    <property type="term" value="P:cellular response to xenobiotic stimulus"/>
    <property type="evidence" value="ECO:0007669"/>
    <property type="project" value="Ensembl"/>
</dbReference>
<dbReference type="GO" id="GO:0090398">
    <property type="term" value="P:cellular senescence"/>
    <property type="evidence" value="ECO:0000250"/>
    <property type="project" value="UniProtKB"/>
</dbReference>
<dbReference type="GO" id="GO:0021549">
    <property type="term" value="P:cerebellum development"/>
    <property type="evidence" value="ECO:0007669"/>
    <property type="project" value="Ensembl"/>
</dbReference>
<dbReference type="GO" id="GO:0051276">
    <property type="term" value="P:chromosome organization"/>
    <property type="evidence" value="ECO:0007669"/>
    <property type="project" value="Ensembl"/>
</dbReference>
<dbReference type="GO" id="GO:0048512">
    <property type="term" value="P:circadian behavior"/>
    <property type="evidence" value="ECO:0000250"/>
    <property type="project" value="UniProtKB"/>
</dbReference>
<dbReference type="GO" id="GO:0008340">
    <property type="term" value="P:determination of adult lifespan"/>
    <property type="evidence" value="ECO:0007669"/>
    <property type="project" value="Ensembl"/>
</dbReference>
<dbReference type="GO" id="GO:0006974">
    <property type="term" value="P:DNA damage response"/>
    <property type="evidence" value="ECO:0000250"/>
    <property type="project" value="UniProtKB"/>
</dbReference>
<dbReference type="GO" id="GO:0030330">
    <property type="term" value="P:DNA damage response, signal transduction by p53 class mediator"/>
    <property type="evidence" value="ECO:0007669"/>
    <property type="project" value="Ensembl"/>
</dbReference>
<dbReference type="GO" id="GO:0006302">
    <property type="term" value="P:double-strand break repair"/>
    <property type="evidence" value="ECO:0007669"/>
    <property type="project" value="Ensembl"/>
</dbReference>
<dbReference type="GO" id="GO:0048568">
    <property type="term" value="P:embryonic organ development"/>
    <property type="evidence" value="ECO:0007669"/>
    <property type="project" value="Ensembl"/>
</dbReference>
<dbReference type="GO" id="GO:0043153">
    <property type="term" value="P:entrainment of circadian clock by photoperiod"/>
    <property type="evidence" value="ECO:0000250"/>
    <property type="project" value="UniProtKB"/>
</dbReference>
<dbReference type="GO" id="GO:0006983">
    <property type="term" value="P:ER overload response"/>
    <property type="evidence" value="ECO:0007669"/>
    <property type="project" value="Ensembl"/>
</dbReference>
<dbReference type="GO" id="GO:0048144">
    <property type="term" value="P:fibroblast proliferation"/>
    <property type="evidence" value="ECO:0007669"/>
    <property type="project" value="Ensembl"/>
</dbReference>
<dbReference type="GO" id="GO:0007369">
    <property type="term" value="P:gastrulation"/>
    <property type="evidence" value="ECO:0007669"/>
    <property type="project" value="Ensembl"/>
</dbReference>
<dbReference type="GO" id="GO:0014009">
    <property type="term" value="P:glial cell proliferation"/>
    <property type="evidence" value="ECO:0007669"/>
    <property type="project" value="Ensembl"/>
</dbReference>
<dbReference type="GO" id="GO:0019661">
    <property type="term" value="P:glucose catabolic process to lactate via pyruvate"/>
    <property type="evidence" value="ECO:0007669"/>
    <property type="project" value="Ensembl"/>
</dbReference>
<dbReference type="GO" id="GO:0060218">
    <property type="term" value="P:hematopoietic stem cell differentiation"/>
    <property type="evidence" value="ECO:0007669"/>
    <property type="project" value="Ensembl"/>
</dbReference>
<dbReference type="GO" id="GO:0001701">
    <property type="term" value="P:in utero embryonic development"/>
    <property type="evidence" value="ECO:0007669"/>
    <property type="project" value="Ensembl"/>
</dbReference>
<dbReference type="GO" id="GO:0042771">
    <property type="term" value="P:intrinsic apoptotic signaling pathway in response to DNA damage by p53 class mediator"/>
    <property type="evidence" value="ECO:0007669"/>
    <property type="project" value="Ensembl"/>
</dbReference>
<dbReference type="GO" id="GO:0070059">
    <property type="term" value="P:intrinsic apoptotic signaling pathway in response to endoplasmic reticulum stress"/>
    <property type="evidence" value="ECO:0007669"/>
    <property type="project" value="Ensembl"/>
</dbReference>
<dbReference type="GO" id="GO:1990144">
    <property type="term" value="P:intrinsic apoptotic signaling pathway in response to hypoxia"/>
    <property type="evidence" value="ECO:0007669"/>
    <property type="project" value="Ensembl"/>
</dbReference>
<dbReference type="GO" id="GO:0043504">
    <property type="term" value="P:mitochondrial DNA repair"/>
    <property type="evidence" value="ECO:0007669"/>
    <property type="project" value="Ensembl"/>
</dbReference>
<dbReference type="GO" id="GO:0000423">
    <property type="term" value="P:mitophagy"/>
    <property type="evidence" value="ECO:0007669"/>
    <property type="project" value="Ensembl"/>
</dbReference>
<dbReference type="GO" id="GO:0031571">
    <property type="term" value="P:mitotic G1 DNA damage checkpoint signaling"/>
    <property type="evidence" value="ECO:0007669"/>
    <property type="project" value="Ensembl"/>
</dbReference>
<dbReference type="GO" id="GO:0009299">
    <property type="term" value="P:mRNA transcription"/>
    <property type="evidence" value="ECO:0007669"/>
    <property type="project" value="Ensembl"/>
</dbReference>
<dbReference type="GO" id="GO:0035264">
    <property type="term" value="P:multicellular organism growth"/>
    <property type="evidence" value="ECO:0007669"/>
    <property type="project" value="Ensembl"/>
</dbReference>
<dbReference type="GO" id="GO:0070266">
    <property type="term" value="P:necroptotic process"/>
    <property type="evidence" value="ECO:0007669"/>
    <property type="project" value="Ensembl"/>
</dbReference>
<dbReference type="GO" id="GO:0043066">
    <property type="term" value="P:negative regulation of apoptotic process"/>
    <property type="evidence" value="ECO:0007669"/>
    <property type="project" value="Ensembl"/>
</dbReference>
<dbReference type="GO" id="GO:0030308">
    <property type="term" value="P:negative regulation of cell growth"/>
    <property type="evidence" value="ECO:0000250"/>
    <property type="project" value="UniProtKB"/>
</dbReference>
<dbReference type="GO" id="GO:0008156">
    <property type="term" value="P:negative regulation of DNA replication"/>
    <property type="evidence" value="ECO:0007669"/>
    <property type="project" value="Ensembl"/>
</dbReference>
<dbReference type="GO" id="GO:0045892">
    <property type="term" value="P:negative regulation of DNA-templated transcription"/>
    <property type="evidence" value="ECO:0000250"/>
    <property type="project" value="UniProtKB"/>
</dbReference>
<dbReference type="GO" id="GO:0048147">
    <property type="term" value="P:negative regulation of fibroblast proliferation"/>
    <property type="evidence" value="ECO:0007669"/>
    <property type="project" value="Ensembl"/>
</dbReference>
<dbReference type="GO" id="GO:1903451">
    <property type="term" value="P:negative regulation of G1 to G0 transition"/>
    <property type="evidence" value="ECO:0007669"/>
    <property type="project" value="Ensembl"/>
</dbReference>
<dbReference type="GO" id="GO:0060253">
    <property type="term" value="P:negative regulation of glial cell proliferation"/>
    <property type="evidence" value="ECO:0007669"/>
    <property type="project" value="Ensembl"/>
</dbReference>
<dbReference type="GO" id="GO:1904024">
    <property type="term" value="P:negative regulation of glucose catabolic process to lactate via pyruvate"/>
    <property type="evidence" value="ECO:0007669"/>
    <property type="project" value="Ensembl"/>
</dbReference>
<dbReference type="GO" id="GO:1903799">
    <property type="term" value="P:negative regulation of miRNA processing"/>
    <property type="evidence" value="ECO:0007669"/>
    <property type="project" value="Ensembl"/>
</dbReference>
<dbReference type="GO" id="GO:1901525">
    <property type="term" value="P:negative regulation of mitophagy"/>
    <property type="evidence" value="ECO:0007669"/>
    <property type="project" value="Ensembl"/>
</dbReference>
<dbReference type="GO" id="GO:0007406">
    <property type="term" value="P:negative regulation of neuroblast proliferation"/>
    <property type="evidence" value="ECO:0007669"/>
    <property type="project" value="Ensembl"/>
</dbReference>
<dbReference type="GO" id="GO:1905856">
    <property type="term" value="P:negative regulation of pentose-phosphate shunt"/>
    <property type="evidence" value="ECO:0007669"/>
    <property type="project" value="Ensembl"/>
</dbReference>
<dbReference type="GO" id="GO:0045861">
    <property type="term" value="P:negative regulation of proteolysis"/>
    <property type="evidence" value="ECO:0007669"/>
    <property type="project" value="Ensembl"/>
</dbReference>
<dbReference type="GO" id="GO:2000378">
    <property type="term" value="P:negative regulation of reactive oxygen species metabolic process"/>
    <property type="evidence" value="ECO:0007669"/>
    <property type="project" value="Ensembl"/>
</dbReference>
<dbReference type="GO" id="GO:2000647">
    <property type="term" value="P:negative regulation of stem cell proliferation"/>
    <property type="evidence" value="ECO:0007669"/>
    <property type="project" value="Ensembl"/>
</dbReference>
<dbReference type="GO" id="GO:0032211">
    <property type="term" value="P:negative regulation of telomere maintenance via telomerase"/>
    <property type="evidence" value="ECO:0007669"/>
    <property type="project" value="Ensembl"/>
</dbReference>
<dbReference type="GO" id="GO:0030512">
    <property type="term" value="P:negative regulation of transforming growth factor beta receptor signaling pathway"/>
    <property type="evidence" value="ECO:0007669"/>
    <property type="project" value="Ensembl"/>
</dbReference>
<dbReference type="GO" id="GO:0007405">
    <property type="term" value="P:neuroblast proliferation"/>
    <property type="evidence" value="ECO:0007669"/>
    <property type="project" value="Ensembl"/>
</dbReference>
<dbReference type="GO" id="GO:0051402">
    <property type="term" value="P:neuron apoptotic process"/>
    <property type="evidence" value="ECO:0007669"/>
    <property type="project" value="Ensembl"/>
</dbReference>
<dbReference type="GO" id="GO:0006289">
    <property type="term" value="P:nucleotide-excision repair"/>
    <property type="evidence" value="ECO:0000250"/>
    <property type="project" value="UniProtKB"/>
</dbReference>
<dbReference type="GO" id="GO:0097252">
    <property type="term" value="P:oligodendrocyte apoptotic process"/>
    <property type="evidence" value="ECO:0000250"/>
    <property type="project" value="UniProtKB"/>
</dbReference>
<dbReference type="GO" id="GO:0090403">
    <property type="term" value="P:oxidative stress-induced premature senescence"/>
    <property type="evidence" value="ECO:0007669"/>
    <property type="project" value="Ensembl"/>
</dbReference>
<dbReference type="GO" id="GO:0043065">
    <property type="term" value="P:positive regulation of apoptotic process"/>
    <property type="evidence" value="ECO:0000250"/>
    <property type="project" value="UniProtKB"/>
</dbReference>
<dbReference type="GO" id="GO:0010666">
    <property type="term" value="P:positive regulation of cardiac muscle cell apoptotic process"/>
    <property type="evidence" value="ECO:0007669"/>
    <property type="project" value="Ensembl"/>
</dbReference>
<dbReference type="GO" id="GO:2000774">
    <property type="term" value="P:positive regulation of cellular senescence"/>
    <property type="evidence" value="ECO:0007669"/>
    <property type="project" value="Ensembl"/>
</dbReference>
<dbReference type="GO" id="GO:1900119">
    <property type="term" value="P:positive regulation of execution phase of apoptosis"/>
    <property type="evidence" value="ECO:0007669"/>
    <property type="project" value="Ensembl"/>
</dbReference>
<dbReference type="GO" id="GO:2001244">
    <property type="term" value="P:positive regulation of intrinsic apoptotic signaling pathway"/>
    <property type="evidence" value="ECO:0000250"/>
    <property type="project" value="UniProtKB"/>
</dbReference>
<dbReference type="GO" id="GO:1902895">
    <property type="term" value="P:positive regulation of miRNA transcription"/>
    <property type="evidence" value="ECO:0007669"/>
    <property type="project" value="Ensembl"/>
</dbReference>
<dbReference type="GO" id="GO:0035794">
    <property type="term" value="P:positive regulation of mitochondrial membrane permeability"/>
    <property type="evidence" value="ECO:0007669"/>
    <property type="project" value="Ensembl"/>
</dbReference>
<dbReference type="GO" id="GO:0043525">
    <property type="term" value="P:positive regulation of neuron apoptotic process"/>
    <property type="evidence" value="ECO:0007669"/>
    <property type="project" value="Ensembl"/>
</dbReference>
<dbReference type="GO" id="GO:0062100">
    <property type="term" value="P:positive regulation of programmed necrotic cell death"/>
    <property type="evidence" value="ECO:0007669"/>
    <property type="project" value="Ensembl"/>
</dbReference>
<dbReference type="GO" id="GO:2000379">
    <property type="term" value="P:positive regulation of reactive oxygen species metabolic process"/>
    <property type="evidence" value="ECO:0007669"/>
    <property type="project" value="Ensembl"/>
</dbReference>
<dbReference type="GO" id="GO:0090200">
    <property type="term" value="P:positive regulation of release of cytochrome c from mitochondria"/>
    <property type="evidence" value="ECO:0007669"/>
    <property type="project" value="Ensembl"/>
</dbReference>
<dbReference type="GO" id="GO:0045899">
    <property type="term" value="P:positive regulation of RNA polymerase II transcription preinitiation complex assembly"/>
    <property type="evidence" value="ECO:0007669"/>
    <property type="project" value="Ensembl"/>
</dbReference>
<dbReference type="GO" id="GO:0070245">
    <property type="term" value="P:positive regulation of thymocyte apoptotic process"/>
    <property type="evidence" value="ECO:0007669"/>
    <property type="project" value="Ensembl"/>
</dbReference>
<dbReference type="GO" id="GO:0045944">
    <property type="term" value="P:positive regulation of transcription by RNA polymerase II"/>
    <property type="evidence" value="ECO:0000250"/>
    <property type="project" value="UniProtKB"/>
</dbReference>
<dbReference type="GO" id="GO:0006606">
    <property type="term" value="P:protein import into nucleus"/>
    <property type="evidence" value="ECO:0007669"/>
    <property type="project" value="Ensembl"/>
</dbReference>
<dbReference type="GO" id="GO:0050821">
    <property type="term" value="P:protein stabilization"/>
    <property type="evidence" value="ECO:0007669"/>
    <property type="project" value="Ensembl"/>
</dbReference>
<dbReference type="GO" id="GO:0051262">
    <property type="term" value="P:protein tetramerization"/>
    <property type="evidence" value="ECO:0007669"/>
    <property type="project" value="InterPro"/>
</dbReference>
<dbReference type="GO" id="GO:0007265">
    <property type="term" value="P:Ras protein signal transduction"/>
    <property type="evidence" value="ECO:0007669"/>
    <property type="project" value="Ensembl"/>
</dbReference>
<dbReference type="GO" id="GO:0072593">
    <property type="term" value="P:reactive oxygen species metabolic process"/>
    <property type="evidence" value="ECO:0007669"/>
    <property type="project" value="Ensembl"/>
</dbReference>
<dbReference type="GO" id="GO:1902749">
    <property type="term" value="P:regulation of cell cycle G2/M phase transition"/>
    <property type="evidence" value="ECO:0007669"/>
    <property type="project" value="Ensembl"/>
</dbReference>
<dbReference type="GO" id="GO:0043516">
    <property type="term" value="P:regulation of DNA damage response, signal transduction by p53 class mediator"/>
    <property type="evidence" value="ECO:0007669"/>
    <property type="project" value="Ensembl"/>
</dbReference>
<dbReference type="GO" id="GO:2000269">
    <property type="term" value="P:regulation of fibroblast apoptotic process"/>
    <property type="evidence" value="ECO:0007669"/>
    <property type="project" value="Ensembl"/>
</dbReference>
<dbReference type="GO" id="GO:1902253">
    <property type="term" value="P:regulation of intrinsic apoptotic signaling pathway by p53 class mediator"/>
    <property type="evidence" value="ECO:0007669"/>
    <property type="project" value="Ensembl"/>
</dbReference>
<dbReference type="GO" id="GO:1902108">
    <property type="term" value="P:regulation of mitochondrial membrane permeability involved in apoptotic process"/>
    <property type="evidence" value="ECO:0007669"/>
    <property type="project" value="Ensembl"/>
</dbReference>
<dbReference type="GO" id="GO:0034103">
    <property type="term" value="P:regulation of tissue remodeling"/>
    <property type="evidence" value="ECO:0007669"/>
    <property type="project" value="Ensembl"/>
</dbReference>
<dbReference type="GO" id="GO:0001836">
    <property type="term" value="P:release of cytochrome c from mitochondria"/>
    <property type="evidence" value="ECO:0007669"/>
    <property type="project" value="Ensembl"/>
</dbReference>
<dbReference type="GO" id="GO:0090399">
    <property type="term" value="P:replicative senescence"/>
    <property type="evidence" value="ECO:0007669"/>
    <property type="project" value="Ensembl"/>
</dbReference>
<dbReference type="GO" id="GO:0002931">
    <property type="term" value="P:response to ischemia"/>
    <property type="evidence" value="ECO:0007669"/>
    <property type="project" value="Ensembl"/>
</dbReference>
<dbReference type="GO" id="GO:0009651">
    <property type="term" value="P:response to salt stress"/>
    <property type="evidence" value="ECO:0007669"/>
    <property type="project" value="Ensembl"/>
</dbReference>
<dbReference type="GO" id="GO:0010165">
    <property type="term" value="P:response to X-ray"/>
    <property type="evidence" value="ECO:0007669"/>
    <property type="project" value="Ensembl"/>
</dbReference>
<dbReference type="GO" id="GO:0009303">
    <property type="term" value="P:rRNA transcription"/>
    <property type="evidence" value="ECO:0007669"/>
    <property type="project" value="Ensembl"/>
</dbReference>
<dbReference type="GO" id="GO:0001756">
    <property type="term" value="P:somitogenesis"/>
    <property type="evidence" value="ECO:0007669"/>
    <property type="project" value="Ensembl"/>
</dbReference>
<dbReference type="GO" id="GO:0072089">
    <property type="term" value="P:stem cell proliferation"/>
    <property type="evidence" value="ECO:0007669"/>
    <property type="project" value="Ensembl"/>
</dbReference>
<dbReference type="GO" id="GO:0033077">
    <property type="term" value="P:T cell differentiation in thymus"/>
    <property type="evidence" value="ECO:0007669"/>
    <property type="project" value="Ensembl"/>
</dbReference>
<dbReference type="GO" id="GO:0002360">
    <property type="term" value="P:T cell lineage commitment"/>
    <property type="evidence" value="ECO:0007669"/>
    <property type="project" value="Ensembl"/>
</dbReference>
<dbReference type="GO" id="GO:0002309">
    <property type="term" value="P:T cell proliferation involved in immune response"/>
    <property type="evidence" value="ECO:0007669"/>
    <property type="project" value="Ensembl"/>
</dbReference>
<dbReference type="GO" id="GO:0070242">
    <property type="term" value="P:thymocyte apoptotic process"/>
    <property type="evidence" value="ECO:0007669"/>
    <property type="project" value="Ensembl"/>
</dbReference>
<dbReference type="GO" id="GO:0045815">
    <property type="term" value="P:transcription initiation-coupled chromatin remodeling"/>
    <property type="evidence" value="ECO:0007669"/>
    <property type="project" value="Ensembl"/>
</dbReference>
<dbReference type="GO" id="GO:0007179">
    <property type="term" value="P:transforming growth factor beta receptor signaling pathway"/>
    <property type="evidence" value="ECO:0007669"/>
    <property type="project" value="Ensembl"/>
</dbReference>
<dbReference type="GO" id="GO:0033209">
    <property type="term" value="P:tumor necrosis factor-mediated signaling pathway"/>
    <property type="evidence" value="ECO:0007669"/>
    <property type="project" value="Ensembl"/>
</dbReference>
<dbReference type="GO" id="GO:0060333">
    <property type="term" value="P:type II interferon-mediated signaling pathway"/>
    <property type="evidence" value="ECO:0007669"/>
    <property type="project" value="Ensembl"/>
</dbReference>
<dbReference type="GO" id="GO:0016032">
    <property type="term" value="P:viral process"/>
    <property type="evidence" value="ECO:0007669"/>
    <property type="project" value="Ensembl"/>
</dbReference>
<dbReference type="CDD" id="cd08367">
    <property type="entry name" value="P53"/>
    <property type="match status" value="1"/>
</dbReference>
<dbReference type="FunFam" id="2.60.40.720:FF:000003">
    <property type="entry name" value="Cellular tumor antigen p53"/>
    <property type="match status" value="1"/>
</dbReference>
<dbReference type="FunFam" id="4.10.170.10:FF:000003">
    <property type="entry name" value="Cellular tumor antigen p53"/>
    <property type="match status" value="1"/>
</dbReference>
<dbReference type="Gene3D" id="2.60.40.720">
    <property type="match status" value="1"/>
</dbReference>
<dbReference type="Gene3D" id="6.10.50.20">
    <property type="match status" value="1"/>
</dbReference>
<dbReference type="Gene3D" id="4.10.170.10">
    <property type="entry name" value="p53-like tetramerisation domain"/>
    <property type="match status" value="1"/>
</dbReference>
<dbReference type="InterPro" id="IPR008967">
    <property type="entry name" value="p53-like_TF_DNA-bd_sf"/>
</dbReference>
<dbReference type="InterPro" id="IPR012346">
    <property type="entry name" value="p53/RUNT-type_TF_DNA-bd_sf"/>
</dbReference>
<dbReference type="InterPro" id="IPR011615">
    <property type="entry name" value="p53_DNA-bd"/>
</dbReference>
<dbReference type="InterPro" id="IPR040926">
    <property type="entry name" value="p53_TAD2"/>
</dbReference>
<dbReference type="InterPro" id="IPR036674">
    <property type="entry name" value="p53_tetramer_sf"/>
</dbReference>
<dbReference type="InterPro" id="IPR010991">
    <property type="entry name" value="p53_tetrameristn"/>
</dbReference>
<dbReference type="InterPro" id="IPR013872">
    <property type="entry name" value="p53_transactivation_domain"/>
</dbReference>
<dbReference type="InterPro" id="IPR002117">
    <property type="entry name" value="p53_tumour_suppressor"/>
</dbReference>
<dbReference type="PANTHER" id="PTHR11447">
    <property type="entry name" value="CELLULAR TUMOR ANTIGEN P53"/>
    <property type="match status" value="1"/>
</dbReference>
<dbReference type="PANTHER" id="PTHR11447:SF6">
    <property type="entry name" value="CELLULAR TUMOR ANTIGEN P53"/>
    <property type="match status" value="1"/>
</dbReference>
<dbReference type="Pfam" id="PF00870">
    <property type="entry name" value="P53"/>
    <property type="match status" value="1"/>
</dbReference>
<dbReference type="Pfam" id="PF08563">
    <property type="entry name" value="P53_TAD"/>
    <property type="match status" value="1"/>
</dbReference>
<dbReference type="Pfam" id="PF07710">
    <property type="entry name" value="P53_tetramer"/>
    <property type="match status" value="1"/>
</dbReference>
<dbReference type="Pfam" id="PF18521">
    <property type="entry name" value="TAD2"/>
    <property type="match status" value="1"/>
</dbReference>
<dbReference type="PRINTS" id="PR00386">
    <property type="entry name" value="P53SUPPRESSR"/>
</dbReference>
<dbReference type="SUPFAM" id="SSF47719">
    <property type="entry name" value="p53 tetramerization domain"/>
    <property type="match status" value="1"/>
</dbReference>
<dbReference type="SUPFAM" id="SSF49417">
    <property type="entry name" value="p53-like transcription factors"/>
    <property type="match status" value="1"/>
</dbReference>
<dbReference type="PROSITE" id="PS00348">
    <property type="entry name" value="P53"/>
    <property type="match status" value="1"/>
</dbReference>
<feature type="chain" id="PRO_0000185704" description="Cellular tumor antigen p53">
    <location>
        <begin position="1"/>
        <end position="393"/>
    </location>
</feature>
<feature type="DNA-binding region" evidence="3">
    <location>
        <begin position="102"/>
        <end position="292"/>
    </location>
</feature>
<feature type="region of interest" description="Interaction with CCAR2" evidence="3">
    <location>
        <begin position="1"/>
        <end position="320"/>
    </location>
</feature>
<feature type="region of interest" description="Interaction with HRMT1L2" evidence="1">
    <location>
        <begin position="1"/>
        <end position="83"/>
    </location>
</feature>
<feature type="region of interest" description="Transcription activation (acidic)">
    <location>
        <begin position="1"/>
        <end position="44"/>
    </location>
</feature>
<feature type="region of interest" description="Disordered" evidence="5">
    <location>
        <begin position="48"/>
        <end position="97"/>
    </location>
</feature>
<feature type="region of interest" description="Interaction with WWOX" evidence="1">
    <location>
        <begin position="66"/>
        <end position="110"/>
    </location>
</feature>
<feature type="region of interest" description="Interaction with HIPK1" evidence="1">
    <location>
        <begin position="100"/>
        <end position="370"/>
    </location>
</feature>
<feature type="region of interest" description="Required for interaction with ZNF385A" evidence="1">
    <location>
        <begin position="100"/>
        <end position="300"/>
    </location>
</feature>
<feature type="region of interest" description="Required for interaction with FBXO42" evidence="1">
    <location>
        <begin position="113"/>
        <end position="236"/>
    </location>
</feature>
<feature type="region of interest" description="Interaction with AXIN1" evidence="1">
    <location>
        <begin position="116"/>
        <end position="292"/>
    </location>
</feature>
<feature type="region of interest" description="Interaction with E4F1" evidence="1">
    <location>
        <begin position="256"/>
        <end position="294"/>
    </location>
</feature>
<feature type="region of interest" description="Interaction with DNA" evidence="1">
    <location>
        <begin position="273"/>
        <end position="280"/>
    </location>
</feature>
<feature type="region of interest" description="Disordered" evidence="5">
    <location>
        <begin position="283"/>
        <end position="325"/>
    </location>
</feature>
<feature type="region of interest" description="Interaction with CARM1" evidence="1">
    <location>
        <begin position="300"/>
        <end position="393"/>
    </location>
</feature>
<feature type="region of interest" description="Interaction with HIPK2" evidence="1">
    <location>
        <begin position="319"/>
        <end position="360"/>
    </location>
</feature>
<feature type="region of interest" description="Oligomerization">
    <location>
        <begin position="325"/>
        <end position="356"/>
    </location>
</feature>
<feature type="region of interest" description="Disordered" evidence="5">
    <location>
        <begin position="352"/>
        <end position="393"/>
    </location>
</feature>
<feature type="region of interest" description="Interaction with USP7" evidence="1">
    <location>
        <begin position="359"/>
        <end position="363"/>
    </location>
</feature>
<feature type="region of interest" description="Basic (repression of DNA-binding)">
    <location>
        <begin position="368"/>
        <end position="387"/>
    </location>
</feature>
<feature type="short sequence motif" description="Bipartite nuclear localization signal" evidence="1">
    <location>
        <begin position="305"/>
        <end position="321"/>
    </location>
</feature>
<feature type="short sequence motif" description="Nuclear export signal" evidence="1">
    <location>
        <begin position="339"/>
        <end position="350"/>
    </location>
</feature>
<feature type="short sequence motif" description="[KR]-[STA]-K motif">
    <location>
        <begin position="370"/>
        <end position="372"/>
    </location>
</feature>
<feature type="compositionally biased region" description="Pro residues" evidence="5">
    <location>
        <begin position="72"/>
        <end position="90"/>
    </location>
</feature>
<feature type="compositionally biased region" description="Basic and acidic residues" evidence="5">
    <location>
        <begin position="283"/>
        <end position="295"/>
    </location>
</feature>
<feature type="compositionally biased region" description="Basic residues" evidence="5">
    <location>
        <begin position="365"/>
        <end position="384"/>
    </location>
</feature>
<feature type="binding site" evidence="3">
    <location>
        <position position="176"/>
    </location>
    <ligand>
        <name>Zn(2+)</name>
        <dbReference type="ChEBI" id="CHEBI:29105"/>
    </ligand>
</feature>
<feature type="binding site" evidence="3">
    <location>
        <position position="179"/>
    </location>
    <ligand>
        <name>Zn(2+)</name>
        <dbReference type="ChEBI" id="CHEBI:29105"/>
    </ligand>
</feature>
<feature type="binding site" evidence="3">
    <location>
        <position position="238"/>
    </location>
    <ligand>
        <name>Zn(2+)</name>
        <dbReference type="ChEBI" id="CHEBI:29105"/>
    </ligand>
</feature>
<feature type="binding site" evidence="3">
    <location>
        <position position="242"/>
    </location>
    <ligand>
        <name>Zn(2+)</name>
        <dbReference type="ChEBI" id="CHEBI:29105"/>
    </ligand>
</feature>
<feature type="site" description="Interaction with DNA" evidence="3">
    <location>
        <position position="120"/>
    </location>
</feature>
<feature type="modified residue" description="Phosphoserine; by HIPK4" evidence="3">
    <location>
        <position position="9"/>
    </location>
</feature>
<feature type="modified residue" description="Phosphoserine; by CDK5, PRPK, AMPK, NUAK1 and ATM" evidence="3">
    <location>
        <position position="15"/>
    </location>
</feature>
<feature type="modified residue" description="Phosphothreonine; by CK1, VRK1 and VRK2" evidence="3">
    <location>
        <position position="18"/>
    </location>
</feature>
<feature type="modified residue" description="Phosphoserine; by CHEK2, CK1 and PLK3" evidence="3">
    <location>
        <position position="20"/>
    </location>
</feature>
<feature type="modified residue" description="Phosphoserine; by CDK5 and CDK7" evidence="3">
    <location>
        <position position="33"/>
    </location>
</feature>
<feature type="modified residue" description="Phosphoserine; by MAPKAPK5" evidence="3">
    <location>
        <position position="37"/>
    </location>
</feature>
<feature type="modified residue" description="Phosphoserine; by CDK5, DYRK2, HIPK2 and PKC/PRKCG" evidence="3">
    <location>
        <position position="46"/>
    </location>
</feature>
<feature type="modified residue" description="Phosphothreonine; by TAF1" evidence="1">
    <location>
        <position position="55"/>
    </location>
</feature>
<feature type="modified residue" description="Phosphothreonine; by TAF1 and GRK5" evidence="1">
    <location>
        <position position="55"/>
    </location>
</feature>
<feature type="modified residue" description="N6-acetyllysine" evidence="3">
    <location>
        <position position="120"/>
    </location>
</feature>
<feature type="modified residue" description="N6-lactoyllysine" evidence="3">
    <location>
        <position position="120"/>
    </location>
</feature>
<feature type="modified residue" description="N6-lactoyllysine" evidence="3">
    <location>
        <position position="139"/>
    </location>
</feature>
<feature type="modified residue" description="Phosphoserine; by AURKB" evidence="3">
    <location>
        <position position="183"/>
    </location>
</feature>
<feature type="modified residue" description="Phosphoserine; by AURKB" evidence="3">
    <location>
        <position position="269"/>
    </location>
</feature>
<feature type="modified residue" description="Phosphothreonine; by AURKB" evidence="3">
    <location>
        <position position="284"/>
    </location>
</feature>
<feature type="modified residue" description="N6-acetyllysine" evidence="3">
    <location>
        <position position="305"/>
    </location>
</feature>
<feature type="modified residue" description="Phosphoserine; by AURKA, CDK1 and CDK2" evidence="3">
    <location>
        <position position="315"/>
    </location>
</feature>
<feature type="modified residue" description="N6-acetyllysine" evidence="2">
    <location>
        <position position="321"/>
    </location>
</feature>
<feature type="modified residue" description="Omega-N-methylarginine" evidence="3">
    <location>
        <position position="333"/>
    </location>
</feature>
<feature type="modified residue" description="Symmetric dimethylarginine" evidence="3">
    <location>
        <position position="335"/>
    </location>
</feature>
<feature type="modified residue" description="Symmetric dimethylarginine" evidence="3">
    <location>
        <position position="337"/>
    </location>
</feature>
<feature type="modified residue" description="N6,N6-dimethyllysine; alternate" evidence="3">
    <location>
        <position position="370"/>
    </location>
</feature>
<feature type="modified residue" description="N6-methyllysine; by SMYD2; alternate" evidence="3">
    <location>
        <position position="370"/>
    </location>
</feature>
<feature type="modified residue" description="N6-methyllysine; by SETD7" evidence="3">
    <location>
        <position position="372"/>
    </location>
</feature>
<feature type="modified residue" description="N6,N6-dimethyllysine; by EHMT1 and EHMT2; alternate" evidence="3">
    <location>
        <position position="373"/>
    </location>
</feature>
<feature type="modified residue" description="N6-acetyllysine; alternate" evidence="3">
    <location>
        <position position="373"/>
    </location>
</feature>
<feature type="modified residue" description="N6-acetyllysine" evidence="3">
    <location>
        <position position="381"/>
    </location>
</feature>
<feature type="modified residue" description="N6,N6-dimethyllysine; alternate" evidence="3">
    <location>
        <position position="382"/>
    </location>
</feature>
<feature type="modified residue" description="N6-acetyllysine; alternate" evidence="3">
    <location>
        <position position="382"/>
    </location>
</feature>
<feature type="modified residue" description="N6-methyllysine; by KMT5A; alternate" evidence="3">
    <location>
        <position position="382"/>
    </location>
</feature>
<feature type="modified residue" description="Phosphoserine; by CK2, CDK2 and NUAK1" evidence="3">
    <location>
        <position position="392"/>
    </location>
</feature>
<feature type="cross-link" description="Glycyl lysine isopeptide (Lys-Gly) (interchain with G-Cter in ubiquitin)" evidence="3">
    <location>
        <position position="24"/>
    </location>
</feature>
<feature type="cross-link" description="Glycyl lysine isopeptide (Lys-Gly) (interchain with G-Cter in ubiquitin)" evidence="3">
    <location>
        <position position="291"/>
    </location>
</feature>
<feature type="cross-link" description="Glycyl lysine isopeptide (Lys-Gly) (interchain with G-Cter in ubiquitin)" evidence="3">
    <location>
        <position position="292"/>
    </location>
</feature>
<feature type="cross-link" description="Glycyl lysine isopeptide (Lys-Gly) (interchain with G-Cter in ubiquitin)" evidence="3">
    <location>
        <position position="351"/>
    </location>
</feature>
<feature type="cross-link" description="Glycyl lysine isopeptide (Lys-Gly) (interchain with G-Cter in ubiquitin)" evidence="3">
    <location>
        <position position="357"/>
    </location>
</feature>
<feature type="cross-link" description="Glycyl lysine isopeptide (Lys-Gly) (interchain with G-Cter in SUMO)" evidence="1">
    <location>
        <position position="386"/>
    </location>
</feature>
<feature type="sequence conflict" description="In Ref. 1; AAB91535." evidence="6" ref="1">
    <original>N</original>
    <variation>H</variation>
    <location>
        <position position="30"/>
    </location>
</feature>
<reference key="1">
    <citation type="submission" date="1996-02" db="EMBL/GenBank/DDBJ databases">
        <authorList>
            <person name="Khan M.A."/>
            <person name="Hansen C."/>
            <person name="Welsh J.A."/>
            <person name="Bennett W.P."/>
        </authorList>
    </citation>
    <scope>NUCLEOTIDE SEQUENCE [GENOMIC DNA]</scope>
</reference>
<reference key="2">
    <citation type="journal article" date="2002" name="Biochem. Biophys. Res. Commun.">
        <title>Somatic mutations in the p53 gene account for the extension of replicative life span of macaque cells.</title>
        <authorList>
            <person name="Shimizu Y."/>
            <person name="Ishida T."/>
        </authorList>
    </citation>
    <scope>NUCLEOTIDE SEQUENCE [MRNA]</scope>
    <source>
        <tissue>Skin</tissue>
    </source>
</reference>
<gene>
    <name type="primary">TP53</name>
    <name type="synonym">P53</name>
</gene>
<evidence type="ECO:0000250" key="1"/>
<evidence type="ECO:0000250" key="2">
    <source>
        <dbReference type="UniProtKB" id="P02340"/>
    </source>
</evidence>
<evidence type="ECO:0000250" key="3">
    <source>
        <dbReference type="UniProtKB" id="P04637"/>
    </source>
</evidence>
<evidence type="ECO:0000250" key="4">
    <source>
        <dbReference type="UniProtKB" id="P10361"/>
    </source>
</evidence>
<evidence type="ECO:0000256" key="5">
    <source>
        <dbReference type="SAM" id="MobiDB-lite"/>
    </source>
</evidence>
<evidence type="ECO:0000305" key="6"/>
<proteinExistence type="evidence at transcript level"/>
<name>P53_MACFA</name>
<keyword id="KW-0007">Acetylation</keyword>
<keyword id="KW-0010">Activator</keyword>
<keyword id="KW-0053">Apoptosis</keyword>
<keyword id="KW-0090">Biological rhythms</keyword>
<keyword id="KW-0131">Cell cycle</keyword>
<keyword id="KW-0963">Cytoplasm</keyword>
<keyword id="KW-0206">Cytoskeleton</keyword>
<keyword id="KW-0238">DNA-binding</keyword>
<keyword id="KW-0256">Endoplasmic reticulum</keyword>
<keyword id="KW-1017">Isopeptide bond</keyword>
<keyword id="KW-0479">Metal-binding</keyword>
<keyword id="KW-0488">Methylation</keyword>
<keyword id="KW-0496">Mitochondrion</keyword>
<keyword id="KW-1210">Necrosis</keyword>
<keyword id="KW-0539">Nucleus</keyword>
<keyword id="KW-0597">Phosphoprotein</keyword>
<keyword id="KW-1185">Reference proteome</keyword>
<keyword id="KW-0678">Repressor</keyword>
<keyword id="KW-0804">Transcription</keyword>
<keyword id="KW-0805">Transcription regulation</keyword>
<keyword id="KW-0043">Tumor suppressor</keyword>
<keyword id="KW-0832">Ubl conjugation</keyword>
<keyword id="KW-0862">Zinc</keyword>